<name>RAB19_BOVIN</name>
<organism>
    <name type="scientific">Bos taurus</name>
    <name type="common">Bovine</name>
    <dbReference type="NCBI Taxonomy" id="9913"/>
    <lineage>
        <taxon>Eukaryota</taxon>
        <taxon>Metazoa</taxon>
        <taxon>Chordata</taxon>
        <taxon>Craniata</taxon>
        <taxon>Vertebrata</taxon>
        <taxon>Euteleostomi</taxon>
        <taxon>Mammalia</taxon>
        <taxon>Eutheria</taxon>
        <taxon>Laurasiatheria</taxon>
        <taxon>Artiodactyla</taxon>
        <taxon>Ruminantia</taxon>
        <taxon>Pecora</taxon>
        <taxon>Bovidae</taxon>
        <taxon>Bovinae</taxon>
        <taxon>Bos</taxon>
    </lineage>
</organism>
<accession>Q3ZC27</accession>
<feature type="chain" id="PRO_0000244613" description="Ras-related protein Rab-19">
    <location>
        <begin position="1"/>
        <end position="217"/>
    </location>
</feature>
<feature type="short sequence motif" description="Switch 1" evidence="3">
    <location>
        <begin position="39"/>
        <end position="54"/>
    </location>
</feature>
<feature type="short sequence motif" description="Switch 2" evidence="3">
    <location>
        <begin position="74"/>
        <end position="89"/>
    </location>
</feature>
<feature type="binding site" evidence="3">
    <location>
        <position position="26"/>
    </location>
    <ligand>
        <name>GTP</name>
        <dbReference type="ChEBI" id="CHEBI:37565"/>
    </ligand>
</feature>
<feature type="binding site" evidence="3">
    <location>
        <position position="28"/>
    </location>
    <ligand>
        <name>GTP</name>
        <dbReference type="ChEBI" id="CHEBI:37565"/>
    </ligand>
</feature>
<feature type="binding site" evidence="3">
    <location>
        <position position="29"/>
    </location>
    <ligand>
        <name>GTP</name>
        <dbReference type="ChEBI" id="CHEBI:37565"/>
    </ligand>
</feature>
<feature type="binding site" evidence="3">
    <location>
        <position position="30"/>
    </location>
    <ligand>
        <name>GTP</name>
        <dbReference type="ChEBI" id="CHEBI:37565"/>
    </ligand>
</feature>
<feature type="binding site" evidence="3">
    <location>
        <position position="31"/>
    </location>
    <ligand>
        <name>GTP</name>
        <dbReference type="ChEBI" id="CHEBI:37565"/>
    </ligand>
</feature>
<feature type="binding site" evidence="3">
    <location>
        <position position="31"/>
    </location>
    <ligand>
        <name>Mg(2+)</name>
        <dbReference type="ChEBI" id="CHEBI:18420"/>
    </ligand>
</feature>
<feature type="binding site" evidence="3">
    <location>
        <position position="32"/>
    </location>
    <ligand>
        <name>GTP</name>
        <dbReference type="ChEBI" id="CHEBI:37565"/>
    </ligand>
</feature>
<feature type="binding site" evidence="3">
    <location>
        <position position="42"/>
    </location>
    <ligand>
        <name>GTP</name>
        <dbReference type="ChEBI" id="CHEBI:37565"/>
    </ligand>
</feature>
<feature type="binding site" evidence="3">
    <location>
        <position position="44"/>
    </location>
    <ligand>
        <name>GTP</name>
        <dbReference type="ChEBI" id="CHEBI:37565"/>
    </ligand>
</feature>
<feature type="binding site" evidence="3">
    <location>
        <position position="49"/>
    </location>
    <ligand>
        <name>GTP</name>
        <dbReference type="ChEBI" id="CHEBI:37565"/>
    </ligand>
</feature>
<feature type="binding site" evidence="3">
    <location>
        <position position="49"/>
    </location>
    <ligand>
        <name>Mg(2+)</name>
        <dbReference type="ChEBI" id="CHEBI:18420"/>
    </ligand>
</feature>
<feature type="binding site" evidence="3">
    <location>
        <position position="72"/>
    </location>
    <ligand>
        <name>Mg(2+)</name>
        <dbReference type="ChEBI" id="CHEBI:18420"/>
    </ligand>
</feature>
<feature type="binding site" evidence="3">
    <location>
        <position position="75"/>
    </location>
    <ligand>
        <name>GTP</name>
        <dbReference type="ChEBI" id="CHEBI:37565"/>
    </ligand>
</feature>
<feature type="binding site" evidence="3">
    <location>
        <position position="130"/>
    </location>
    <ligand>
        <name>GTP</name>
        <dbReference type="ChEBI" id="CHEBI:37565"/>
    </ligand>
</feature>
<feature type="binding site" evidence="3">
    <location>
        <position position="131"/>
    </location>
    <ligand>
        <name>GTP</name>
        <dbReference type="ChEBI" id="CHEBI:37565"/>
    </ligand>
</feature>
<feature type="binding site" evidence="3">
    <location>
        <position position="133"/>
    </location>
    <ligand>
        <name>GTP</name>
        <dbReference type="ChEBI" id="CHEBI:37565"/>
    </ligand>
</feature>
<feature type="binding site" evidence="3">
    <location>
        <position position="161"/>
    </location>
    <ligand>
        <name>GTP</name>
        <dbReference type="ChEBI" id="CHEBI:37565"/>
    </ligand>
</feature>
<feature type="binding site" evidence="3">
    <location>
        <position position="162"/>
    </location>
    <ligand>
        <name>GTP</name>
        <dbReference type="ChEBI" id="CHEBI:37565"/>
    </ligand>
</feature>
<feature type="binding site" evidence="3">
    <location>
        <position position="163"/>
    </location>
    <ligand>
        <name>GTP</name>
        <dbReference type="ChEBI" id="CHEBI:37565"/>
    </ligand>
</feature>
<feature type="modified residue" description="Cysteine methyl ester" evidence="1">
    <location>
        <position position="217"/>
    </location>
</feature>
<feature type="lipid moiety-binding region" description="S-geranylgeranyl cysteine" evidence="1">
    <location>
        <position position="215"/>
    </location>
</feature>
<feature type="lipid moiety-binding region" description="S-geranylgeranyl cysteine" evidence="1">
    <location>
        <position position="217"/>
    </location>
</feature>
<protein>
    <recommendedName>
        <fullName>Ras-related protein Rab-19</fullName>
        <ecNumber evidence="3">3.6.5.2</ecNumber>
    </recommendedName>
</protein>
<proteinExistence type="evidence at transcript level"/>
<evidence type="ECO:0000250" key="1"/>
<evidence type="ECO:0000250" key="2">
    <source>
        <dbReference type="UniProtKB" id="A4D1S5"/>
    </source>
</evidence>
<evidence type="ECO:0000250" key="3">
    <source>
        <dbReference type="UniProtKB" id="Q9H0U4"/>
    </source>
</evidence>
<evidence type="ECO:0000305" key="4"/>
<gene>
    <name type="primary">RAB19</name>
</gene>
<dbReference type="EC" id="3.6.5.2" evidence="3"/>
<dbReference type="EMBL" id="BC102961">
    <property type="protein sequence ID" value="AAI02962.1"/>
    <property type="molecule type" value="mRNA"/>
</dbReference>
<dbReference type="RefSeq" id="NP_001030212.1">
    <property type="nucleotide sequence ID" value="NM_001035040.2"/>
</dbReference>
<dbReference type="SMR" id="Q3ZC27"/>
<dbReference type="FunCoup" id="Q3ZC27">
    <property type="interactions" value="158"/>
</dbReference>
<dbReference type="STRING" id="9913.ENSBTAP00000016258"/>
<dbReference type="PaxDb" id="9913-ENSBTAP00000016258"/>
<dbReference type="GeneID" id="506911"/>
<dbReference type="KEGG" id="bta:506911"/>
<dbReference type="CTD" id="401409"/>
<dbReference type="VEuPathDB" id="HostDB:ENSBTAG00000012261"/>
<dbReference type="eggNOG" id="KOG0084">
    <property type="taxonomic scope" value="Eukaryota"/>
</dbReference>
<dbReference type="HOGENOM" id="CLU_041217_23_1_1"/>
<dbReference type="InParanoid" id="Q3ZC27"/>
<dbReference type="OMA" id="DMWEKRH"/>
<dbReference type="OrthoDB" id="9989112at2759"/>
<dbReference type="TreeFam" id="TF300097"/>
<dbReference type="Reactome" id="R-BTA-8873719">
    <property type="pathway name" value="RAB geranylgeranylation"/>
</dbReference>
<dbReference type="Proteomes" id="UP000009136">
    <property type="component" value="Chromosome 4"/>
</dbReference>
<dbReference type="Bgee" id="ENSBTAG00000012261">
    <property type="expression patterns" value="Expressed in thymus and 72 other cell types or tissues"/>
</dbReference>
<dbReference type="GO" id="GO:0012505">
    <property type="term" value="C:endomembrane system"/>
    <property type="evidence" value="ECO:0000318"/>
    <property type="project" value="GO_Central"/>
</dbReference>
<dbReference type="GO" id="GO:0005886">
    <property type="term" value="C:plasma membrane"/>
    <property type="evidence" value="ECO:0007669"/>
    <property type="project" value="UniProtKB-SubCell"/>
</dbReference>
<dbReference type="GO" id="GO:0005525">
    <property type="term" value="F:GTP binding"/>
    <property type="evidence" value="ECO:0007669"/>
    <property type="project" value="UniProtKB-KW"/>
</dbReference>
<dbReference type="GO" id="GO:0003924">
    <property type="term" value="F:GTPase activity"/>
    <property type="evidence" value="ECO:0000318"/>
    <property type="project" value="GO_Central"/>
</dbReference>
<dbReference type="GO" id="GO:0000045">
    <property type="term" value="P:autophagosome assembly"/>
    <property type="evidence" value="ECO:0000318"/>
    <property type="project" value="GO_Central"/>
</dbReference>
<dbReference type="GO" id="GO:0006886">
    <property type="term" value="P:intracellular protein transport"/>
    <property type="evidence" value="ECO:0000318"/>
    <property type="project" value="GO_Central"/>
</dbReference>
<dbReference type="CDD" id="cd01864">
    <property type="entry name" value="Rab19"/>
    <property type="match status" value="1"/>
</dbReference>
<dbReference type="FunFam" id="3.40.50.300:FF:000887">
    <property type="entry name" value="Ras-related protein Rab-19"/>
    <property type="match status" value="1"/>
</dbReference>
<dbReference type="Gene3D" id="3.40.50.300">
    <property type="entry name" value="P-loop containing nucleotide triphosphate hydrolases"/>
    <property type="match status" value="1"/>
</dbReference>
<dbReference type="InterPro" id="IPR027417">
    <property type="entry name" value="P-loop_NTPase"/>
</dbReference>
<dbReference type="InterPro" id="IPR048040">
    <property type="entry name" value="Rab19/43"/>
</dbReference>
<dbReference type="InterPro" id="IPR050209">
    <property type="entry name" value="Rab_GTPases_membrane_traffic"/>
</dbReference>
<dbReference type="InterPro" id="IPR005225">
    <property type="entry name" value="Small_GTP-bd"/>
</dbReference>
<dbReference type="InterPro" id="IPR001806">
    <property type="entry name" value="Small_GTPase"/>
</dbReference>
<dbReference type="NCBIfam" id="TIGR00231">
    <property type="entry name" value="small_GTP"/>
    <property type="match status" value="1"/>
</dbReference>
<dbReference type="PANTHER" id="PTHR47979">
    <property type="entry name" value="DRAB11-RELATED"/>
    <property type="match status" value="1"/>
</dbReference>
<dbReference type="Pfam" id="PF00071">
    <property type="entry name" value="Ras"/>
    <property type="match status" value="1"/>
</dbReference>
<dbReference type="PRINTS" id="PR00449">
    <property type="entry name" value="RASTRNSFRMNG"/>
</dbReference>
<dbReference type="SMART" id="SM00175">
    <property type="entry name" value="RAB"/>
    <property type="match status" value="1"/>
</dbReference>
<dbReference type="SMART" id="SM00176">
    <property type="entry name" value="RAN"/>
    <property type="match status" value="1"/>
</dbReference>
<dbReference type="SMART" id="SM00173">
    <property type="entry name" value="RAS"/>
    <property type="match status" value="1"/>
</dbReference>
<dbReference type="SMART" id="SM00174">
    <property type="entry name" value="RHO"/>
    <property type="match status" value="1"/>
</dbReference>
<dbReference type="SUPFAM" id="SSF52540">
    <property type="entry name" value="P-loop containing nucleoside triphosphate hydrolases"/>
    <property type="match status" value="1"/>
</dbReference>
<dbReference type="PROSITE" id="PS51419">
    <property type="entry name" value="RAB"/>
    <property type="match status" value="1"/>
</dbReference>
<sequence length="217" mass="24485">MQFSSSARTVDENFDYLFKIILIGDSNVGKTCVVQHFKSGVYMEAQQNTIGVDFTVRALEIDGKKVKMQVWDTAGQERFRTITQSYYRSAHAAIIAYDLTRRSTFESVPHWIHEIEKYGAANLVIMLIGNKCDLWEKRHVLFEDACILAEKYGLLAVLETSAKESKNIDEVFVLMARELMARHSLPLYGEGAPGSLPLESTPVLMAPAPREKNQCTC</sequence>
<reference key="1">
    <citation type="submission" date="2005-08" db="EMBL/GenBank/DDBJ databases">
        <authorList>
            <consortium name="NIH - Mammalian Gene Collection (MGC) project"/>
        </authorList>
    </citation>
    <scope>NUCLEOTIDE SEQUENCE [LARGE SCALE MRNA]</scope>
    <source>
        <strain>Crossbred X Angus</strain>
        <tissue>Ileum</tissue>
    </source>
</reference>
<keyword id="KW-1003">Cell membrane</keyword>
<keyword id="KW-0342">GTP-binding</keyword>
<keyword id="KW-0378">Hydrolase</keyword>
<keyword id="KW-0449">Lipoprotein</keyword>
<keyword id="KW-0460">Magnesium</keyword>
<keyword id="KW-0472">Membrane</keyword>
<keyword id="KW-0479">Metal-binding</keyword>
<keyword id="KW-0488">Methylation</keyword>
<keyword id="KW-0547">Nucleotide-binding</keyword>
<keyword id="KW-0636">Prenylation</keyword>
<keyword id="KW-1185">Reference proteome</keyword>
<comment type="function">
    <text evidence="3">The small GTPases Rab are key regulators of intracellular membrane trafficking, from the formation of transport vesicles to their fusion with membranes. Rabs cycle between an inactive GDP-bound form and an active GTP-bound form that is able to recruit to membranes different set of downstream effectors directly responsible for vesicle formation, movement, tethering and fusion.</text>
</comment>
<comment type="catalytic activity">
    <reaction evidence="3">
        <text>GTP + H2O = GDP + phosphate + H(+)</text>
        <dbReference type="Rhea" id="RHEA:19669"/>
        <dbReference type="ChEBI" id="CHEBI:15377"/>
        <dbReference type="ChEBI" id="CHEBI:15378"/>
        <dbReference type="ChEBI" id="CHEBI:37565"/>
        <dbReference type="ChEBI" id="CHEBI:43474"/>
        <dbReference type="ChEBI" id="CHEBI:58189"/>
        <dbReference type="EC" id="3.6.5.2"/>
    </reaction>
    <physiologicalReaction direction="left-to-right" evidence="3">
        <dbReference type="Rhea" id="RHEA:19670"/>
    </physiologicalReaction>
</comment>
<comment type="cofactor">
    <cofactor evidence="3">
        <name>Mg(2+)</name>
        <dbReference type="ChEBI" id="CHEBI:18420"/>
    </cofactor>
</comment>
<comment type="activity regulation">
    <text evidence="2">Regulated by guanine nucleotide exchange factors (GEFs) which promote the exchange of bound GDP for free GTP. Regulated by GTPase activating proteins (GAPs) which increase the GTP hydrolysis activity. Inhibited by GDP dissociation inhibitors (GDIs).</text>
</comment>
<comment type="subcellular location">
    <subcellularLocation>
        <location evidence="4">Cell membrane</location>
        <topology evidence="4">Lipid-anchor</topology>
        <orientation evidence="4">Cytoplasmic side</orientation>
    </subcellularLocation>
</comment>
<comment type="domain">
    <text evidence="3">Switch 1, switch 2 and the interswitch regions are characteristic of Rab GTPases and mediate the interactions with Rab downstream effectors. The switch regions undergo conformational changes upon nucleotide binding which drives interaction with specific sets of effector proteins, with most effectors only binding to GTP-bound Rab.</text>
</comment>
<comment type="similarity">
    <text evidence="4">Belongs to the small GTPase superfamily. Rab family.</text>
</comment>